<gene>
    <name type="primary">B3GALT2</name>
</gene>
<reference key="1">
    <citation type="submission" date="2004-11" db="EMBL/GenBank/DDBJ databases">
        <authorList>
            <consortium name="The German cDNA consortium"/>
        </authorList>
    </citation>
    <scope>NUCLEOTIDE SEQUENCE [LARGE SCALE MRNA]</scope>
    <source>
        <tissue>Brain cortex</tissue>
    </source>
</reference>
<keyword id="KW-0325">Glycoprotein</keyword>
<keyword id="KW-0328">Glycosyltransferase</keyword>
<keyword id="KW-0333">Golgi apparatus</keyword>
<keyword id="KW-0443">Lipid metabolism</keyword>
<keyword id="KW-0464">Manganese</keyword>
<keyword id="KW-0472">Membrane</keyword>
<keyword id="KW-1185">Reference proteome</keyword>
<keyword id="KW-0735">Signal-anchor</keyword>
<keyword id="KW-0808">Transferase</keyword>
<keyword id="KW-0812">Transmembrane</keyword>
<keyword id="KW-1133">Transmembrane helix</keyword>
<organism>
    <name type="scientific">Pongo abelii</name>
    <name type="common">Sumatran orangutan</name>
    <name type="synonym">Pongo pygmaeus abelii</name>
    <dbReference type="NCBI Taxonomy" id="9601"/>
    <lineage>
        <taxon>Eukaryota</taxon>
        <taxon>Metazoa</taxon>
        <taxon>Chordata</taxon>
        <taxon>Craniata</taxon>
        <taxon>Vertebrata</taxon>
        <taxon>Euteleostomi</taxon>
        <taxon>Mammalia</taxon>
        <taxon>Eutheria</taxon>
        <taxon>Euarchontoglires</taxon>
        <taxon>Primates</taxon>
        <taxon>Haplorrhini</taxon>
        <taxon>Catarrhini</taxon>
        <taxon>Hominidae</taxon>
        <taxon>Pongo</taxon>
    </lineage>
</organism>
<feature type="chain" id="PRO_0000219152" description="Beta-1,3-galactosyltransferase 2">
    <location>
        <begin position="1"/>
        <end position="422"/>
    </location>
</feature>
<feature type="topological domain" description="Cytoplasmic" evidence="3">
    <location>
        <begin position="1"/>
        <end position="24"/>
    </location>
</feature>
<feature type="transmembrane region" description="Helical; Signal-anchor for type II membrane protein" evidence="3">
    <location>
        <begin position="25"/>
        <end position="45"/>
    </location>
</feature>
<feature type="topological domain" description="Lumenal" evidence="3">
    <location>
        <begin position="46"/>
        <end position="422"/>
    </location>
</feature>
<feature type="region of interest" description="Disordered" evidence="4">
    <location>
        <begin position="90"/>
        <end position="110"/>
    </location>
</feature>
<feature type="glycosylation site" description="N-linked (GlcNAc...) asparagine" evidence="3">
    <location>
        <position position="75"/>
    </location>
</feature>
<feature type="glycosylation site" description="N-linked (GlcNAc...) asparagine" evidence="3">
    <location>
        <position position="100"/>
    </location>
</feature>
<feature type="glycosylation site" description="N-linked (GlcNAc...) asparagine" evidence="3">
    <location>
        <position position="119"/>
    </location>
</feature>
<feature type="glycosylation site" description="N-linked (GlcNAc...) asparagine" evidence="3">
    <location>
        <position position="176"/>
    </location>
</feature>
<feature type="glycosylation site" description="N-linked (GlcNAc...) asparagine" evidence="3">
    <location>
        <position position="226"/>
    </location>
</feature>
<accession>Q5R5Y3</accession>
<name>B3GT2_PONAB</name>
<evidence type="ECO:0000250" key="1"/>
<evidence type="ECO:0000250" key="2">
    <source>
        <dbReference type="UniProtKB" id="O43825"/>
    </source>
</evidence>
<evidence type="ECO:0000255" key="3"/>
<evidence type="ECO:0000256" key="4">
    <source>
        <dbReference type="SAM" id="MobiDB-lite"/>
    </source>
</evidence>
<evidence type="ECO:0000305" key="5"/>
<comment type="function">
    <text evidence="2">Beta-1,3-galactosyltransferase that transfers galactose from UDP-galactose to substrates with a terminal beta-N-acetylglucosamine (beta-GlcNAc) residue. Can also utilize substrates with a terminal galactose residue, albeit with lower efficiency. Involved in the biosynthesis of the carbohydrate moieties of glycolipids and glycoproteins. Inactive towards substrates with terminal alpha-N-acetylglucosamine (alpha-GlcNAc) or alpha-N-acetylgalactosamine (alpha-GalNAc) residues.</text>
</comment>
<comment type="catalytic activity">
    <reaction evidence="2">
        <text>an N-acetyl-beta-D-glucosaminyl derivative + UDP-alpha-D-galactose = a beta-D-galactosyl-(1-&gt;3)-N-acetyl-beta-D-glucosaminyl derivative + UDP + H(+)</text>
        <dbReference type="Rhea" id="RHEA:53432"/>
        <dbReference type="ChEBI" id="CHEBI:15378"/>
        <dbReference type="ChEBI" id="CHEBI:58223"/>
        <dbReference type="ChEBI" id="CHEBI:61631"/>
        <dbReference type="ChEBI" id="CHEBI:66914"/>
        <dbReference type="ChEBI" id="CHEBI:133506"/>
        <dbReference type="EC" id="2.4.1.86"/>
    </reaction>
    <physiologicalReaction direction="left-to-right" evidence="2">
        <dbReference type="Rhea" id="RHEA:53433"/>
    </physiologicalReaction>
</comment>
<comment type="catalytic activity">
    <reaction evidence="2">
        <text>a beta-D-GlcNAc-(1-&gt;3)-beta-D-Gal-(1-&gt;4)-beta-D-Glc-(1&lt;-&gt;1)-Cer(d18:1(4E)) + UDP-alpha-D-galactose = a beta-D-Gal-(1-&gt;3)-beta-D-GlcNAc-(1-&gt;3)-beta-D-Gal-(1-&gt;4)-beta-D-Glc-(1&lt;-&gt;1')-Cer(d18:1(4E)) + UDP + H(+)</text>
        <dbReference type="Rhea" id="RHEA:16045"/>
        <dbReference type="ChEBI" id="CHEBI:15378"/>
        <dbReference type="ChEBI" id="CHEBI:17103"/>
        <dbReference type="ChEBI" id="CHEBI:17292"/>
        <dbReference type="ChEBI" id="CHEBI:58223"/>
        <dbReference type="ChEBI" id="CHEBI:66914"/>
        <dbReference type="EC" id="2.4.1.86"/>
    </reaction>
    <physiologicalReaction direction="left-to-right" evidence="2">
        <dbReference type="Rhea" id="RHEA:16046"/>
    </physiologicalReaction>
</comment>
<comment type="catalytic activity">
    <reaction evidence="2">
        <text>a neolactoside IV(3)-beta-GlcNAc-nLc4Cer(d18:1(4E)) + UDP-alpha-D-galactose = a neolactoside IV(3)-beta-[Gal-beta-(1-&gt;3)-GlcNAc]-nLc4Cer(d18:1(4E)) + UDP + H(+)</text>
        <dbReference type="Rhea" id="RHEA:41936"/>
        <dbReference type="ChEBI" id="CHEBI:15378"/>
        <dbReference type="ChEBI" id="CHEBI:58223"/>
        <dbReference type="ChEBI" id="CHEBI:66914"/>
        <dbReference type="ChEBI" id="CHEBI:78565"/>
        <dbReference type="ChEBI" id="CHEBI:142448"/>
    </reaction>
    <physiologicalReaction direction="left-to-right" evidence="2">
        <dbReference type="Rhea" id="RHEA:41937"/>
    </physiologicalReaction>
</comment>
<comment type="cofactor">
    <cofactor evidence="1">
        <name>Mn(2+)</name>
        <dbReference type="ChEBI" id="CHEBI:29035"/>
    </cofactor>
</comment>
<comment type="pathway">
    <text>Protein modification; protein glycosylation.</text>
</comment>
<comment type="subcellular location">
    <subcellularLocation>
        <location evidence="5">Golgi apparatus membrane</location>
        <topology evidence="5">Single-pass type II membrane protein</topology>
    </subcellularLocation>
</comment>
<comment type="similarity">
    <text evidence="5">Belongs to the glycosyltransferase 31 family.</text>
</comment>
<protein>
    <recommendedName>
        <fullName>Beta-1,3-galactosyltransferase 2</fullName>
        <shortName>Beta-1,3-GalTase 2</shortName>
        <shortName>Beta3Gal-T2</shortName>
        <shortName>Beta3GalT2</shortName>
        <ecNumber evidence="2">2.4.1.86</ecNumber>
    </recommendedName>
    <alternativeName>
        <fullName>UDP-galactose:2-acetamido-2-deoxy-D-glucose 3beta-galactosyltransferase 2</fullName>
    </alternativeName>
</protein>
<dbReference type="EC" id="2.4.1.86" evidence="2"/>
<dbReference type="EMBL" id="CR860718">
    <property type="protein sequence ID" value="CAH92833.1"/>
    <property type="molecule type" value="mRNA"/>
</dbReference>
<dbReference type="RefSeq" id="NP_001126654.1">
    <property type="nucleotide sequence ID" value="NM_001133182.1"/>
</dbReference>
<dbReference type="SMR" id="Q5R5Y3"/>
<dbReference type="STRING" id="9601.ENSPPYP00000000448"/>
<dbReference type="CAZy" id="GT31">
    <property type="family name" value="Glycosyltransferase Family 31"/>
</dbReference>
<dbReference type="GlyCosmos" id="Q5R5Y3">
    <property type="glycosylation" value="5 sites, No reported glycans"/>
</dbReference>
<dbReference type="GeneID" id="100173654"/>
<dbReference type="KEGG" id="pon:100173654"/>
<dbReference type="CTD" id="8707"/>
<dbReference type="eggNOG" id="KOG2287">
    <property type="taxonomic scope" value="Eukaryota"/>
</dbReference>
<dbReference type="InParanoid" id="Q5R5Y3"/>
<dbReference type="OrthoDB" id="5512589at2759"/>
<dbReference type="UniPathway" id="UPA00378"/>
<dbReference type="Proteomes" id="UP000001595">
    <property type="component" value="Unplaced"/>
</dbReference>
<dbReference type="GO" id="GO:0000139">
    <property type="term" value="C:Golgi membrane"/>
    <property type="evidence" value="ECO:0007669"/>
    <property type="project" value="UniProtKB-SubCell"/>
</dbReference>
<dbReference type="GO" id="GO:0008499">
    <property type="term" value="F:N-acetyl-beta-D-glucosaminide beta-(1,3)-galactosyltransferase activity"/>
    <property type="evidence" value="ECO:0007669"/>
    <property type="project" value="UniProtKB-EC"/>
</dbReference>
<dbReference type="GO" id="GO:0006629">
    <property type="term" value="P:lipid metabolic process"/>
    <property type="evidence" value="ECO:0007669"/>
    <property type="project" value="UniProtKB-KW"/>
</dbReference>
<dbReference type="GO" id="GO:0006493">
    <property type="term" value="P:protein O-linked glycosylation"/>
    <property type="evidence" value="ECO:0007669"/>
    <property type="project" value="TreeGrafter"/>
</dbReference>
<dbReference type="FunFam" id="3.90.550.50:FF:000001">
    <property type="entry name" value="Hexosyltransferase"/>
    <property type="match status" value="1"/>
</dbReference>
<dbReference type="Gene3D" id="3.90.550.50">
    <property type="match status" value="1"/>
</dbReference>
<dbReference type="InterPro" id="IPR045821">
    <property type="entry name" value="B3GT2_N"/>
</dbReference>
<dbReference type="InterPro" id="IPR002659">
    <property type="entry name" value="Glyco_trans_31"/>
</dbReference>
<dbReference type="PANTHER" id="PTHR11214:SF19">
    <property type="entry name" value="BETA-1,3-GALACTOSYLTRANSFERASE 2"/>
    <property type="match status" value="1"/>
</dbReference>
<dbReference type="PANTHER" id="PTHR11214">
    <property type="entry name" value="BETA-1,3-N-ACETYLGLUCOSAMINYLTRANSFERASE"/>
    <property type="match status" value="1"/>
</dbReference>
<dbReference type="Pfam" id="PF19341">
    <property type="entry name" value="B3GALT2_N"/>
    <property type="match status" value="1"/>
</dbReference>
<dbReference type="Pfam" id="PF01762">
    <property type="entry name" value="Galactosyl_T"/>
    <property type="match status" value="1"/>
</dbReference>
<sequence>MLQWRRRHCCFAKMTWNAKRSLFRTHLIGVLSLVFLFAMFLFFNHHDWLPGRAGFKENPVTYTFRGFRSTKSETNHSSLRNIWKETVPQTLRPQTATNSNNTDLSPQGVTGLENTLSANGSIYNEKGTGYPNSYHFKYIINEPEKCQEKSPFLILLIAAEPGQIEARRAIRQTWGNESLAPGIQITRIFLLGLSIKLNGYLQRAILEESRQYHDIIQQEYLDTYYNLTIKTLMGMNWVATYCPHIPYVMKTDSDMFVNTEYLINKLLKPDLPPRHNYFTGYLMRGYAPNRNKDSKWYMPPDLYPSERYPVFCSGTGYVFSGDLAEKIFKVSLGIRRLHLEDVYVGICLAKLRIDPVPPPNEFVFNHWRVSYSSCKYSHLITSHQFQPSELIKYWNHLQQNKHNACANAAKEKAGRYRHRKLH</sequence>
<proteinExistence type="evidence at transcript level"/>